<feature type="chain" id="PRO_0000152014" description="Leucine--tRNA ligase">
    <location>
        <begin position="1"/>
        <end position="860"/>
    </location>
</feature>
<feature type="short sequence motif" description="'HIGH' region">
    <location>
        <begin position="42"/>
        <end position="52"/>
    </location>
</feature>
<feature type="short sequence motif" description="'KMSKS' region">
    <location>
        <begin position="619"/>
        <end position="623"/>
    </location>
</feature>
<feature type="binding site" evidence="1">
    <location>
        <position position="622"/>
    </location>
    <ligand>
        <name>ATP</name>
        <dbReference type="ChEBI" id="CHEBI:30616"/>
    </ligand>
</feature>
<reference key="1">
    <citation type="journal article" date="2001" name="Nature">
        <title>Genome sequence of enterohaemorrhagic Escherichia coli O157:H7.</title>
        <authorList>
            <person name="Perna N.T."/>
            <person name="Plunkett G. III"/>
            <person name="Burland V."/>
            <person name="Mau B."/>
            <person name="Glasner J.D."/>
            <person name="Rose D.J."/>
            <person name="Mayhew G.F."/>
            <person name="Evans P.S."/>
            <person name="Gregor J."/>
            <person name="Kirkpatrick H.A."/>
            <person name="Posfai G."/>
            <person name="Hackett J."/>
            <person name="Klink S."/>
            <person name="Boutin A."/>
            <person name="Shao Y."/>
            <person name="Miller L."/>
            <person name="Grotbeck E.J."/>
            <person name="Davis N.W."/>
            <person name="Lim A."/>
            <person name="Dimalanta E.T."/>
            <person name="Potamousis K."/>
            <person name="Apodaca J."/>
            <person name="Anantharaman T.S."/>
            <person name="Lin J."/>
            <person name="Yen G."/>
            <person name="Schwartz D.C."/>
            <person name="Welch R.A."/>
            <person name="Blattner F.R."/>
        </authorList>
    </citation>
    <scope>NUCLEOTIDE SEQUENCE [LARGE SCALE GENOMIC DNA]</scope>
    <source>
        <strain>O157:H7 / EDL933 / ATCC 700927 / EHEC</strain>
    </source>
</reference>
<reference key="2">
    <citation type="journal article" date="2001" name="DNA Res.">
        <title>Complete genome sequence of enterohemorrhagic Escherichia coli O157:H7 and genomic comparison with a laboratory strain K-12.</title>
        <authorList>
            <person name="Hayashi T."/>
            <person name="Makino K."/>
            <person name="Ohnishi M."/>
            <person name="Kurokawa K."/>
            <person name="Ishii K."/>
            <person name="Yokoyama K."/>
            <person name="Han C.-G."/>
            <person name="Ohtsubo E."/>
            <person name="Nakayama K."/>
            <person name="Murata T."/>
            <person name="Tanaka M."/>
            <person name="Tobe T."/>
            <person name="Iida T."/>
            <person name="Takami H."/>
            <person name="Honda T."/>
            <person name="Sasakawa C."/>
            <person name="Ogasawara N."/>
            <person name="Yasunaga T."/>
            <person name="Kuhara S."/>
            <person name="Shiba T."/>
            <person name="Hattori M."/>
            <person name="Shinagawa H."/>
        </authorList>
    </citation>
    <scope>NUCLEOTIDE SEQUENCE [LARGE SCALE GENOMIC DNA]</scope>
    <source>
        <strain>O157:H7 / Sakai / RIMD 0509952 / EHEC</strain>
    </source>
</reference>
<organism>
    <name type="scientific">Escherichia coli O157:H7</name>
    <dbReference type="NCBI Taxonomy" id="83334"/>
    <lineage>
        <taxon>Bacteria</taxon>
        <taxon>Pseudomonadati</taxon>
        <taxon>Pseudomonadota</taxon>
        <taxon>Gammaproteobacteria</taxon>
        <taxon>Enterobacterales</taxon>
        <taxon>Enterobacteriaceae</taxon>
        <taxon>Escherichia</taxon>
    </lineage>
</organism>
<proteinExistence type="inferred from homology"/>
<gene>
    <name evidence="1" type="primary">leuS</name>
    <name type="ordered locus">Z0789</name>
    <name type="ordered locus">ECs0680</name>
</gene>
<evidence type="ECO:0000255" key="1">
    <source>
        <dbReference type="HAMAP-Rule" id="MF_00049"/>
    </source>
</evidence>
<sequence length="860" mass="97234">MQEQYRPEEIESKVQLHWDEKRTFEVTEDESKEKYYCLSMLPYPSGRLHMGHVRNYTIGDVIARYQRMLGKNVLQPIGWDAFGLPAEGAAVKNNTAPAPWTYDNIAYMKNQLKMLGFGYDWSRELATCTPEYYRWEQKFFTELYKKGLVYKKTSAVNWCPNDQTVLANEQVIDGCCWRCDTKVERKEIPQWFIKITAYADELLNDLDKLDHWPDTVKTMQRNWIGRSEGVEITFNVNDYDNTLTVYTTRPDTFMGCTYLAVAAGHPLAQKAAENNPELAAFIDECRNTKVAEAEMATMEKKGVNTGFKAVHPLTGEEIPVWAANFVLMEYGTGAVMAVPGHDQRDYEFASKYGLNIKPVILAADGSEPDLSQQALTEKGVLFNSGEFNGLDHEAAFNAIADKLTAMGVGERKVNYRLRDWGVSRQRYWGAPIPMVTLEDGTVMPTPDDQLPVILPEDVVMDGITSPIKADPQWAKTTVNGMPALRETDTFDTFMESSWYYARYTCPEYKEGMLDSEAANYWLPVDIYIGGIEHAIMHLLYFRFFHKLMRDAGMVNSDEPAKQLLCQGMVLADAFYYVGENGERNWVSPVDAIVERDEKGRIVKAKDAAGHELVYTGMSKMSKSKNNGIDPQVMVERYGADTVRLFMMFASPADMTLEWQESGVEGANRFLKRVWKLVYEHTAKGDVAALNVDALTEDQKALRRDVHKTIAKVTDDIGRRQTFNTAIAAIMELMNKLAKAPTDGEQDRALMQEALLAVVRMLNPFTPHICFTLWQELKGEGDIDNAPWPVADEKAMVEDSTLVVVQVNGKVRAKITVPVDATEEQVRERAGQEHLVAKYLDGVTVRKVIYVPGKLLNLVVG</sequence>
<dbReference type="EC" id="6.1.1.4" evidence="1"/>
<dbReference type="EMBL" id="AE005174">
    <property type="protein sequence ID" value="AAG54976.1"/>
    <property type="molecule type" value="Genomic_DNA"/>
</dbReference>
<dbReference type="EMBL" id="BA000007">
    <property type="protein sequence ID" value="BAB34103.1"/>
    <property type="molecule type" value="Genomic_DNA"/>
</dbReference>
<dbReference type="PIR" id="D85564">
    <property type="entry name" value="D85564"/>
</dbReference>
<dbReference type="PIR" id="H90713">
    <property type="entry name" value="H90713"/>
</dbReference>
<dbReference type="RefSeq" id="NP_308707.1">
    <property type="nucleotide sequence ID" value="NC_002695.1"/>
</dbReference>
<dbReference type="RefSeq" id="WP_001301620.1">
    <property type="nucleotide sequence ID" value="NZ_VOAI01000012.1"/>
</dbReference>
<dbReference type="SMR" id="Q8XBN8"/>
<dbReference type="STRING" id="155864.Z0789"/>
<dbReference type="GeneID" id="917041"/>
<dbReference type="KEGG" id="ece:Z0789"/>
<dbReference type="KEGG" id="ecs:ECs_0680"/>
<dbReference type="PATRIC" id="fig|386585.9.peg.792"/>
<dbReference type="eggNOG" id="COG0495">
    <property type="taxonomic scope" value="Bacteria"/>
</dbReference>
<dbReference type="HOGENOM" id="CLU_004427_0_0_6"/>
<dbReference type="OMA" id="GIEHACM"/>
<dbReference type="Proteomes" id="UP000000558">
    <property type="component" value="Chromosome"/>
</dbReference>
<dbReference type="Proteomes" id="UP000002519">
    <property type="component" value="Chromosome"/>
</dbReference>
<dbReference type="GO" id="GO:0005829">
    <property type="term" value="C:cytosol"/>
    <property type="evidence" value="ECO:0007669"/>
    <property type="project" value="TreeGrafter"/>
</dbReference>
<dbReference type="GO" id="GO:0002161">
    <property type="term" value="F:aminoacyl-tRNA deacylase activity"/>
    <property type="evidence" value="ECO:0007669"/>
    <property type="project" value="InterPro"/>
</dbReference>
<dbReference type="GO" id="GO:0005524">
    <property type="term" value="F:ATP binding"/>
    <property type="evidence" value="ECO:0007669"/>
    <property type="project" value="UniProtKB-UniRule"/>
</dbReference>
<dbReference type="GO" id="GO:0004823">
    <property type="term" value="F:leucine-tRNA ligase activity"/>
    <property type="evidence" value="ECO:0007669"/>
    <property type="project" value="UniProtKB-UniRule"/>
</dbReference>
<dbReference type="GO" id="GO:0006429">
    <property type="term" value="P:leucyl-tRNA aminoacylation"/>
    <property type="evidence" value="ECO:0007669"/>
    <property type="project" value="UniProtKB-UniRule"/>
</dbReference>
<dbReference type="CDD" id="cd07958">
    <property type="entry name" value="Anticodon_Ia_Leu_BEm"/>
    <property type="match status" value="1"/>
</dbReference>
<dbReference type="CDD" id="cd00812">
    <property type="entry name" value="LeuRS_core"/>
    <property type="match status" value="1"/>
</dbReference>
<dbReference type="FunFam" id="1.10.730.10:FF:000002">
    <property type="entry name" value="Leucine--tRNA ligase"/>
    <property type="match status" value="2"/>
</dbReference>
<dbReference type="FunFam" id="2.20.28.290:FF:000001">
    <property type="entry name" value="Leucine--tRNA ligase"/>
    <property type="match status" value="1"/>
</dbReference>
<dbReference type="FunFam" id="3.10.20.590:FF:000001">
    <property type="entry name" value="Leucine--tRNA ligase"/>
    <property type="match status" value="1"/>
</dbReference>
<dbReference type="FunFam" id="3.40.50.620:FF:000003">
    <property type="entry name" value="Leucine--tRNA ligase"/>
    <property type="match status" value="1"/>
</dbReference>
<dbReference type="FunFam" id="3.40.50.620:FF:000124">
    <property type="entry name" value="Leucine--tRNA ligase"/>
    <property type="match status" value="1"/>
</dbReference>
<dbReference type="FunFam" id="3.90.740.10:FF:000012">
    <property type="entry name" value="Leucine--tRNA ligase"/>
    <property type="match status" value="1"/>
</dbReference>
<dbReference type="Gene3D" id="2.20.28.290">
    <property type="match status" value="1"/>
</dbReference>
<dbReference type="Gene3D" id="3.10.20.590">
    <property type="match status" value="1"/>
</dbReference>
<dbReference type="Gene3D" id="3.40.50.620">
    <property type="entry name" value="HUPs"/>
    <property type="match status" value="2"/>
</dbReference>
<dbReference type="Gene3D" id="1.10.730.10">
    <property type="entry name" value="Isoleucyl-tRNA Synthetase, Domain 1"/>
    <property type="match status" value="2"/>
</dbReference>
<dbReference type="HAMAP" id="MF_00049_B">
    <property type="entry name" value="Leu_tRNA_synth_B"/>
    <property type="match status" value="1"/>
</dbReference>
<dbReference type="InterPro" id="IPR001412">
    <property type="entry name" value="aa-tRNA-synth_I_CS"/>
</dbReference>
<dbReference type="InterPro" id="IPR002300">
    <property type="entry name" value="aa-tRNA-synth_Ia"/>
</dbReference>
<dbReference type="InterPro" id="IPR002302">
    <property type="entry name" value="Leu-tRNA-ligase"/>
</dbReference>
<dbReference type="InterPro" id="IPR025709">
    <property type="entry name" value="Leu_tRNA-synth_edit"/>
</dbReference>
<dbReference type="InterPro" id="IPR013155">
    <property type="entry name" value="M/V/L/I-tRNA-synth_anticd-bd"/>
</dbReference>
<dbReference type="InterPro" id="IPR015413">
    <property type="entry name" value="Methionyl/Leucyl_tRNA_Synth"/>
</dbReference>
<dbReference type="InterPro" id="IPR014729">
    <property type="entry name" value="Rossmann-like_a/b/a_fold"/>
</dbReference>
<dbReference type="InterPro" id="IPR009080">
    <property type="entry name" value="tRNAsynth_Ia_anticodon-bd"/>
</dbReference>
<dbReference type="InterPro" id="IPR009008">
    <property type="entry name" value="Val/Leu/Ile-tRNA-synth_edit"/>
</dbReference>
<dbReference type="NCBIfam" id="TIGR00396">
    <property type="entry name" value="leuS_bact"/>
    <property type="match status" value="1"/>
</dbReference>
<dbReference type="PANTHER" id="PTHR43740:SF2">
    <property type="entry name" value="LEUCINE--TRNA LIGASE, MITOCHONDRIAL"/>
    <property type="match status" value="1"/>
</dbReference>
<dbReference type="PANTHER" id="PTHR43740">
    <property type="entry name" value="LEUCYL-TRNA SYNTHETASE"/>
    <property type="match status" value="1"/>
</dbReference>
<dbReference type="Pfam" id="PF08264">
    <property type="entry name" value="Anticodon_1"/>
    <property type="match status" value="1"/>
</dbReference>
<dbReference type="Pfam" id="PF00133">
    <property type="entry name" value="tRNA-synt_1"/>
    <property type="match status" value="2"/>
</dbReference>
<dbReference type="Pfam" id="PF13603">
    <property type="entry name" value="tRNA-synt_1_2"/>
    <property type="match status" value="1"/>
</dbReference>
<dbReference type="Pfam" id="PF09334">
    <property type="entry name" value="tRNA-synt_1g"/>
    <property type="match status" value="1"/>
</dbReference>
<dbReference type="PRINTS" id="PR00985">
    <property type="entry name" value="TRNASYNTHLEU"/>
</dbReference>
<dbReference type="SUPFAM" id="SSF47323">
    <property type="entry name" value="Anticodon-binding domain of a subclass of class I aminoacyl-tRNA synthetases"/>
    <property type="match status" value="1"/>
</dbReference>
<dbReference type="SUPFAM" id="SSF52374">
    <property type="entry name" value="Nucleotidylyl transferase"/>
    <property type="match status" value="1"/>
</dbReference>
<dbReference type="SUPFAM" id="SSF50677">
    <property type="entry name" value="ValRS/IleRS/LeuRS editing domain"/>
    <property type="match status" value="1"/>
</dbReference>
<dbReference type="PROSITE" id="PS00178">
    <property type="entry name" value="AA_TRNA_LIGASE_I"/>
    <property type="match status" value="1"/>
</dbReference>
<name>SYL_ECO57</name>
<keyword id="KW-0030">Aminoacyl-tRNA synthetase</keyword>
<keyword id="KW-0067">ATP-binding</keyword>
<keyword id="KW-0963">Cytoplasm</keyword>
<keyword id="KW-0436">Ligase</keyword>
<keyword id="KW-0547">Nucleotide-binding</keyword>
<keyword id="KW-0648">Protein biosynthesis</keyword>
<keyword id="KW-1185">Reference proteome</keyword>
<comment type="catalytic activity">
    <reaction evidence="1">
        <text>tRNA(Leu) + L-leucine + ATP = L-leucyl-tRNA(Leu) + AMP + diphosphate</text>
        <dbReference type="Rhea" id="RHEA:11688"/>
        <dbReference type="Rhea" id="RHEA-COMP:9613"/>
        <dbReference type="Rhea" id="RHEA-COMP:9622"/>
        <dbReference type="ChEBI" id="CHEBI:30616"/>
        <dbReference type="ChEBI" id="CHEBI:33019"/>
        <dbReference type="ChEBI" id="CHEBI:57427"/>
        <dbReference type="ChEBI" id="CHEBI:78442"/>
        <dbReference type="ChEBI" id="CHEBI:78494"/>
        <dbReference type="ChEBI" id="CHEBI:456215"/>
        <dbReference type="EC" id="6.1.1.4"/>
    </reaction>
</comment>
<comment type="subcellular location">
    <subcellularLocation>
        <location evidence="1">Cytoplasm</location>
    </subcellularLocation>
</comment>
<comment type="similarity">
    <text evidence="1">Belongs to the class-I aminoacyl-tRNA synthetase family.</text>
</comment>
<protein>
    <recommendedName>
        <fullName evidence="1">Leucine--tRNA ligase</fullName>
        <ecNumber evidence="1">6.1.1.4</ecNumber>
    </recommendedName>
    <alternativeName>
        <fullName evidence="1">Leucyl-tRNA synthetase</fullName>
        <shortName evidence="1">LeuRS</shortName>
    </alternativeName>
</protein>
<accession>Q8XBN8</accession>